<accession>Q32PH0</accession>
<accession>A1L534</accession>
<protein>
    <recommendedName>
        <fullName>Trafficking protein particle complex subunit 9</fullName>
    </recommendedName>
    <alternativeName>
        <fullName>NIK- and IKBKB-binding protein</fullName>
    </alternativeName>
</protein>
<sequence length="1138" mass="127004">MSVPDYMQCAEDHQTLLVVVQPVGIVSEENFFRIYKRISSVSQISVRDSQRALYIRYRHHYPPENSEWGDFQTHRKVVGLITITDCFSAKDWPQIFEKFHVQKEIYGSTLYDSRLFVFGLQGEIAEQPRTDVAFYPSYEDCATVEKRIEDFVESLFIVLESKRLDRATDKSGDKIPLLCVPFEKKDFVGLDTDSRHYKKRCQGRMRKHVGDLCLQAGMLQDSLVHYHMSVELLRSVNDFLWLGAALEGLCSASVIYHYPGGTGGKAGARRFPGSALPAEAANRHRPGALTTNGINADTSTEIGRAKNCLSPEDIIEKYKEAISYYSKYKNAGVIELEACVKAVRVLAIQKRSMEASEFLQNAVYINLRQLSEEEKIQRYSILSELYELIGFHRKSAFFKRVAAMQCVAPSISEPGWRACYKLLLETLPGYSLSLDPQDFNKGTHRGWAAVQMRLLHELVYASRRMGNPALSVRHLSFLLQTMLDFLSDQEKKDVTQSLENYTSKCPGTMELLTLPDGLTLPPVPFTKLPIVRRVKLLDLPASLRPQKMKSSLGPSVSAKSPFIYSPIIAHSRGEERSKKIDFQWVQGDVCEVQLMVYNPMPFELRVENMGLLTSGVEFESLPAALSLPAESGLYPVTLVGVPQTTGTITVSGYHTTVFGVFSDCLLDSLPGIKTSGSTVEVIPALPRLQISTSLPRSAHSLQPSSGDKISTNVSVQLYNGETQQLVVRLENIGMEPLEKLEVTSKILTTKEKLYGDFLSWKLEDTLAQFPLQPGKVATFTISIKVKLDFSCQENLLQDLSDDGISVSGFPLCSPFRQVVRPRVESKPVNAAEGGRPGEPCHVKTLEAVLNFKYSGGPGHVEGYYRNLALGLHVEVEPSVFFTRVSTLPATSTRQCHLLLDVFNATEHELSVGARSDEELILHAGECQRMAIQVDKFNFESFPESPADKGQFANSKHLEEERQEARGLEINSKLDIHWTIPSLKRTGEASVEGLLNQLVLEHLQLAPLLWDVLVDGQPCDCQAAACRVGDPVRLEVRLTNRSPRSVGPFALSVVPFQDHQNGVHSYDLRHAVSFVGSGTFYLDKVQPSGQAACLGALLFLYTGDFFLHIRFHEDGPSKELPPSWFCLPSVHVRALEAQA</sequence>
<evidence type="ECO:0000250" key="1"/>
<evidence type="ECO:0000250" key="2">
    <source>
        <dbReference type="UniProtKB" id="Q96Q05"/>
    </source>
</evidence>
<evidence type="ECO:0000305" key="3"/>
<name>TPPC9_BOVIN</name>
<comment type="function">
    <text>Functions as an activator of NF-kappa-B through increased phosphorylation of the IKK complex. May function in neuronal cells differentiation. May play a role in vesicular transport from endoplasmic reticulum to Golgi.</text>
</comment>
<comment type="subunit">
    <text evidence="1">Component of the multisubunit TRAPP (transport protein particle) complex, which includes at least TRAPPC2, TRAPPC2L, TRAPPC3, TRAPPC3L, TRAPPC4, TRAPPC5, TRAPPC8, TRAPPC9, TRAPPC10, TRAPPC11 and TRAPPC12. Directly interacts with IKBKB and MAP3K14 (By similarity).</text>
</comment>
<comment type="interaction">
    <interactant intactId="EBI-9522367">
        <id>Q32PH0</id>
    </interactant>
    <interactant intactId="EBI-9350549">
        <id>PRO_0000038035</id>
        <dbReference type="UniProtKB" id="P19711"/>
    </interactant>
    <organismsDiffer>true</organismsDiffer>
    <experiments>7</experiments>
</comment>
<comment type="subcellular location">
    <subcellularLocation>
        <location evidence="1">Golgi apparatus</location>
        <location evidence="1">cis-Golgi network</location>
    </subcellularLocation>
    <subcellularLocation>
        <location evidence="1">Endoplasmic reticulum</location>
    </subcellularLocation>
    <subcellularLocation>
        <location evidence="1">Cytoplasm</location>
    </subcellularLocation>
    <text evidence="1">Processes and cell bodies of neurons.</text>
</comment>
<comment type="similarity">
    <text evidence="3">Belongs to the NIBP family.</text>
</comment>
<organism>
    <name type="scientific">Bos taurus</name>
    <name type="common">Bovine</name>
    <dbReference type="NCBI Taxonomy" id="9913"/>
    <lineage>
        <taxon>Eukaryota</taxon>
        <taxon>Metazoa</taxon>
        <taxon>Chordata</taxon>
        <taxon>Craniata</taxon>
        <taxon>Vertebrata</taxon>
        <taxon>Euteleostomi</taxon>
        <taxon>Mammalia</taxon>
        <taxon>Eutheria</taxon>
        <taxon>Laurasiatheria</taxon>
        <taxon>Artiodactyla</taxon>
        <taxon>Ruminantia</taxon>
        <taxon>Pecora</taxon>
        <taxon>Bovidae</taxon>
        <taxon>Bovinae</taxon>
        <taxon>Bos</taxon>
    </lineage>
</organism>
<gene>
    <name type="primary">TRAPPC9</name>
    <name type="synonym">NIBP</name>
</gene>
<feature type="chain" id="PRO_0000341585" description="Trafficking protein particle complex subunit 9">
    <location>
        <begin position="1"/>
        <end position="1138"/>
    </location>
</feature>
<feature type="modified residue" description="Phosphoserine" evidence="2">
    <location>
        <position position="557"/>
    </location>
</feature>
<feature type="modified residue" description="Phosphoserine" evidence="2">
    <location>
        <position position="944"/>
    </location>
</feature>
<feature type="sequence conflict" description="In Ref. 2; ABM06084." evidence="3" ref="2">
    <original>K</original>
    <variation>E</variation>
    <location>
        <position position="708"/>
    </location>
</feature>
<feature type="sequence conflict" description="In Ref. 2; ABM06084." evidence="3" ref="2">
    <original>G</original>
    <variation>R</variation>
    <location>
        <position position="912"/>
    </location>
</feature>
<reference key="1">
    <citation type="submission" date="2005-10" db="EMBL/GenBank/DDBJ databases">
        <authorList>
            <consortium name="NIH - Mammalian Gene Collection (MGC) project"/>
        </authorList>
    </citation>
    <scope>NUCLEOTIDE SEQUENCE [LARGE SCALE MRNA]</scope>
    <source>
        <strain>Hereford</strain>
        <tissue>Thymus</tissue>
    </source>
</reference>
<reference key="2">
    <citation type="journal article" date="2005" name="BMC Genomics">
        <title>Characterization of 954 bovine full-CDS cDNA sequences.</title>
        <authorList>
            <person name="Harhay G.P."/>
            <person name="Sonstegard T.S."/>
            <person name="Keele J.W."/>
            <person name="Heaton M.P."/>
            <person name="Clawson M.L."/>
            <person name="Snelling W.M."/>
            <person name="Wiedmann R.T."/>
            <person name="Van Tassell C.P."/>
            <person name="Smith T.P.L."/>
        </authorList>
    </citation>
    <scope>NUCLEOTIDE SEQUENCE [LARGE SCALE MRNA] OF 366-1138</scope>
</reference>
<keyword id="KW-0963">Cytoplasm</keyword>
<keyword id="KW-0221">Differentiation</keyword>
<keyword id="KW-0256">Endoplasmic reticulum</keyword>
<keyword id="KW-0333">Golgi apparatus</keyword>
<keyword id="KW-0597">Phosphoprotein</keyword>
<keyword id="KW-1185">Reference proteome</keyword>
<dbReference type="EMBL" id="BC108119">
    <property type="protein sequence ID" value="AAI08120.1"/>
    <property type="molecule type" value="mRNA"/>
</dbReference>
<dbReference type="EMBL" id="BT029821">
    <property type="protein sequence ID" value="ABM06084.1"/>
    <property type="molecule type" value="mRNA"/>
</dbReference>
<dbReference type="RefSeq" id="NP_001032551.1">
    <property type="nucleotide sequence ID" value="NM_001037474.2"/>
</dbReference>
<dbReference type="FunCoup" id="Q32PH0">
    <property type="interactions" value="4456"/>
</dbReference>
<dbReference type="IntAct" id="Q32PH0">
    <property type="interactions" value="1"/>
</dbReference>
<dbReference type="STRING" id="9913.ENSBTAP00000037206"/>
<dbReference type="PaxDb" id="9913-ENSBTAP00000037206"/>
<dbReference type="GeneID" id="533451"/>
<dbReference type="KEGG" id="bta:533451"/>
<dbReference type="CTD" id="83696"/>
<dbReference type="eggNOG" id="KOG1953">
    <property type="taxonomic scope" value="Eukaryota"/>
</dbReference>
<dbReference type="InParanoid" id="Q32PH0"/>
<dbReference type="OrthoDB" id="27962at2759"/>
<dbReference type="Proteomes" id="UP000009136">
    <property type="component" value="Unplaced"/>
</dbReference>
<dbReference type="GO" id="GO:0005783">
    <property type="term" value="C:endoplasmic reticulum"/>
    <property type="evidence" value="ECO:0007669"/>
    <property type="project" value="UniProtKB-SubCell"/>
</dbReference>
<dbReference type="GO" id="GO:0005802">
    <property type="term" value="C:trans-Golgi network"/>
    <property type="evidence" value="ECO:0000318"/>
    <property type="project" value="GO_Central"/>
</dbReference>
<dbReference type="GO" id="GO:0030154">
    <property type="term" value="P:cell differentiation"/>
    <property type="evidence" value="ECO:0007669"/>
    <property type="project" value="UniProtKB-KW"/>
</dbReference>
<dbReference type="InterPro" id="IPR013935">
    <property type="entry name" value="TRAPP_II_complex_Trs120"/>
</dbReference>
<dbReference type="PANTHER" id="PTHR21512">
    <property type="entry name" value="TRAFFICKING PROTEIN PARTICLE COMPLEX SUBUNIT 9"/>
    <property type="match status" value="1"/>
</dbReference>
<dbReference type="PANTHER" id="PTHR21512:SF5">
    <property type="entry name" value="TRAFFICKING PROTEIN PARTICLE COMPLEX SUBUNIT 9"/>
    <property type="match status" value="1"/>
</dbReference>
<dbReference type="Pfam" id="PF08626">
    <property type="entry name" value="TRAPPC9-Trs120"/>
    <property type="match status" value="2"/>
</dbReference>
<proteinExistence type="evidence at protein level"/>